<sequence>MRYKSMGDSLSIRNEKAFEAALQALRRHAIKDGVYDIRRHFIEDEQRFSNFSLNLDDFLFDFSKCGVTFKTLQLLDDLAVAADVLGRRDAMFSGKAINTTEKRSVLHIALRLPADEVFMLDGTDLVHDIQGVLADMERFSDMVRDGSYKGNSGEKIIDIVNIGIGGSDLGPAMVTYALKPYHDGPNCHFVSNADSAHISDTLSVLNPATTLFVIASKTFTTAETIANAQVARQWIMSHLGKEAVCKHFIAVSSALDKVAEFGIDSSRTFRFWDWVGGRYSIWSAIGLVVMLAIGGQNFRQFLEGAQHMDRHFKTAPLRKNIPIRFALLGFWHRVVCGYASRAVIPYAQRLARFPAYLQQLDMESNGKQVSLDGKTLTFSSGPVVWGDSGTNGQHAFFQLLHQGTDVIPVEFILFIKGHEQNLHPMYDMLVANCLAQSKALMKGRSVEDARRMLLKSGIDERESENLALHKSFAGNRPNMMLVQDLLTPFALGRLIALYEHRIFVEGILMNINSFDQWGVELGKELANELLPILRGENKTNNRDSSTLGLLAHIQARRGE</sequence>
<protein>
    <recommendedName>
        <fullName evidence="1">Glucose-6-phosphate isomerase</fullName>
        <shortName evidence="1">GPI</shortName>
        <ecNumber evidence="1">5.3.1.9</ecNumber>
    </recommendedName>
    <alternativeName>
        <fullName evidence="1">Phosphoglucose isomerase</fullName>
        <shortName evidence="1">PGI</shortName>
    </alternativeName>
    <alternativeName>
        <fullName evidence="1">Phosphohexose isomerase</fullName>
        <shortName evidence="1">PHI</shortName>
    </alternativeName>
</protein>
<accession>Q8L1Z9</accession>
<name>G6PI_BARHE</name>
<evidence type="ECO:0000255" key="1">
    <source>
        <dbReference type="HAMAP-Rule" id="MF_00473"/>
    </source>
</evidence>
<reference key="1">
    <citation type="journal article" date="2002" name="Proc. Natl. Acad. Sci. U.S.A.">
        <title>The global phylogeny of glycolytic enzymes.</title>
        <authorList>
            <person name="Canback B."/>
            <person name="Andersson S.G.E."/>
            <person name="Kurland C.G."/>
        </authorList>
    </citation>
    <scope>NUCLEOTIDE SEQUENCE [GENOMIC DNA]</scope>
    <source>
        <strain>Houston 1</strain>
    </source>
</reference>
<reference key="2">
    <citation type="submission" date="2002-01" db="EMBL/GenBank/DDBJ databases">
        <authorList>
            <person name="Alsmark C."/>
        </authorList>
    </citation>
    <scope>NUCLEOTIDE SEQUENCE [GENOMIC DNA]</scope>
    <source>
        <strain>Houston 1</strain>
    </source>
</reference>
<reference key="3">
    <citation type="journal article" date="2004" name="Proc. Natl. Acad. Sci. U.S.A.">
        <title>The louse-borne human pathogen Bartonella quintana is a genomic derivative of the zoonotic agent Bartonella henselae.</title>
        <authorList>
            <person name="Alsmark U.C.M."/>
            <person name="Frank A.C."/>
            <person name="Karlberg E.O."/>
            <person name="Legault B.-A."/>
            <person name="Ardell D.H."/>
            <person name="Canbaeck B."/>
            <person name="Eriksson A.-S."/>
            <person name="Naeslund A.K."/>
            <person name="Handley S.A."/>
            <person name="Huvet M."/>
            <person name="La Scola B."/>
            <person name="Holmberg M."/>
            <person name="Andersson S.G.E."/>
        </authorList>
    </citation>
    <scope>NUCLEOTIDE SEQUENCE [LARGE SCALE GENOMIC DNA]</scope>
    <source>
        <strain>ATCC 49882 / DSM 28221 / CCUG 30454 / Houston 1</strain>
    </source>
</reference>
<feature type="chain" id="PRO_0000180598" description="Glucose-6-phosphate isomerase">
    <location>
        <begin position="1"/>
        <end position="559"/>
    </location>
</feature>
<feature type="active site" description="Proton donor" evidence="1">
    <location>
        <position position="363"/>
    </location>
</feature>
<feature type="active site" evidence="1">
    <location>
        <position position="394"/>
    </location>
</feature>
<feature type="active site" evidence="1">
    <location>
        <position position="523"/>
    </location>
</feature>
<comment type="function">
    <text evidence="1">Catalyzes the reversible isomerization of glucose-6-phosphate to fructose-6-phosphate.</text>
</comment>
<comment type="catalytic activity">
    <reaction evidence="1">
        <text>alpha-D-glucose 6-phosphate = beta-D-fructose 6-phosphate</text>
        <dbReference type="Rhea" id="RHEA:11816"/>
        <dbReference type="ChEBI" id="CHEBI:57634"/>
        <dbReference type="ChEBI" id="CHEBI:58225"/>
        <dbReference type="EC" id="5.3.1.9"/>
    </reaction>
</comment>
<comment type="pathway">
    <text evidence="1">Carbohydrate biosynthesis; gluconeogenesis.</text>
</comment>
<comment type="pathway">
    <text evidence="1">Carbohydrate degradation; glycolysis; D-glyceraldehyde 3-phosphate and glycerone phosphate from D-glucose: step 2/4.</text>
</comment>
<comment type="subcellular location">
    <subcellularLocation>
        <location evidence="1">Cytoplasm</location>
    </subcellularLocation>
</comment>
<comment type="similarity">
    <text evidence="1">Belongs to the GPI family.</text>
</comment>
<organism>
    <name type="scientific">Bartonella henselae (strain ATCC 49882 / DSM 28221 / CCUG 30454 / Houston 1)</name>
    <name type="common">Rochalimaea henselae</name>
    <dbReference type="NCBI Taxonomy" id="283166"/>
    <lineage>
        <taxon>Bacteria</taxon>
        <taxon>Pseudomonadati</taxon>
        <taxon>Pseudomonadota</taxon>
        <taxon>Alphaproteobacteria</taxon>
        <taxon>Hyphomicrobiales</taxon>
        <taxon>Bartonellaceae</taxon>
        <taxon>Bartonella</taxon>
    </lineage>
</organism>
<gene>
    <name evidence="1" type="primary">pgi</name>
    <name type="ordered locus">BH01370</name>
</gene>
<dbReference type="EC" id="5.3.1.9" evidence="1"/>
<dbReference type="EMBL" id="AY074771">
    <property type="protein sequence ID" value="AAL74284.1"/>
    <property type="molecule type" value="Genomic_DNA"/>
</dbReference>
<dbReference type="EMBL" id="BX897699">
    <property type="protein sequence ID" value="CAF26951.1"/>
    <property type="molecule type" value="Genomic_DNA"/>
</dbReference>
<dbReference type="SMR" id="Q8L1Z9"/>
<dbReference type="PaxDb" id="283166-BH01370"/>
<dbReference type="EnsemblBacteria" id="CAF26951">
    <property type="protein sequence ID" value="CAF26951"/>
    <property type="gene ID" value="BH01370"/>
</dbReference>
<dbReference type="KEGG" id="bhe:BH01370"/>
<dbReference type="eggNOG" id="COG0166">
    <property type="taxonomic scope" value="Bacteria"/>
</dbReference>
<dbReference type="UniPathway" id="UPA00109">
    <property type="reaction ID" value="UER00181"/>
</dbReference>
<dbReference type="UniPathway" id="UPA00138"/>
<dbReference type="Proteomes" id="UP000000421">
    <property type="component" value="Chromosome"/>
</dbReference>
<dbReference type="GO" id="GO:0005829">
    <property type="term" value="C:cytosol"/>
    <property type="evidence" value="ECO:0007669"/>
    <property type="project" value="TreeGrafter"/>
</dbReference>
<dbReference type="GO" id="GO:0097367">
    <property type="term" value="F:carbohydrate derivative binding"/>
    <property type="evidence" value="ECO:0007669"/>
    <property type="project" value="InterPro"/>
</dbReference>
<dbReference type="GO" id="GO:0004347">
    <property type="term" value="F:glucose-6-phosphate isomerase activity"/>
    <property type="evidence" value="ECO:0007669"/>
    <property type="project" value="UniProtKB-UniRule"/>
</dbReference>
<dbReference type="GO" id="GO:0048029">
    <property type="term" value="F:monosaccharide binding"/>
    <property type="evidence" value="ECO:0007669"/>
    <property type="project" value="TreeGrafter"/>
</dbReference>
<dbReference type="GO" id="GO:0006094">
    <property type="term" value="P:gluconeogenesis"/>
    <property type="evidence" value="ECO:0007669"/>
    <property type="project" value="UniProtKB-UniRule"/>
</dbReference>
<dbReference type="GO" id="GO:0051156">
    <property type="term" value="P:glucose 6-phosphate metabolic process"/>
    <property type="evidence" value="ECO:0007669"/>
    <property type="project" value="TreeGrafter"/>
</dbReference>
<dbReference type="GO" id="GO:0006096">
    <property type="term" value="P:glycolytic process"/>
    <property type="evidence" value="ECO:0007669"/>
    <property type="project" value="UniProtKB-UniRule"/>
</dbReference>
<dbReference type="CDD" id="cd05015">
    <property type="entry name" value="SIS_PGI_1"/>
    <property type="match status" value="1"/>
</dbReference>
<dbReference type="CDD" id="cd05016">
    <property type="entry name" value="SIS_PGI_2"/>
    <property type="match status" value="1"/>
</dbReference>
<dbReference type="Gene3D" id="1.10.1390.10">
    <property type="match status" value="1"/>
</dbReference>
<dbReference type="Gene3D" id="3.40.50.10490">
    <property type="entry name" value="Glucose-6-phosphate isomerase like protein, domain 1"/>
    <property type="match status" value="2"/>
</dbReference>
<dbReference type="HAMAP" id="MF_00473">
    <property type="entry name" value="G6P_isomerase"/>
    <property type="match status" value="1"/>
</dbReference>
<dbReference type="InterPro" id="IPR001672">
    <property type="entry name" value="G6P_Isomerase"/>
</dbReference>
<dbReference type="InterPro" id="IPR023096">
    <property type="entry name" value="G6P_Isomerase_C"/>
</dbReference>
<dbReference type="InterPro" id="IPR018189">
    <property type="entry name" value="Phosphoglucose_isomerase_CS"/>
</dbReference>
<dbReference type="InterPro" id="IPR046348">
    <property type="entry name" value="SIS_dom_sf"/>
</dbReference>
<dbReference type="InterPro" id="IPR035476">
    <property type="entry name" value="SIS_PGI_1"/>
</dbReference>
<dbReference type="InterPro" id="IPR035482">
    <property type="entry name" value="SIS_PGI_2"/>
</dbReference>
<dbReference type="NCBIfam" id="NF001211">
    <property type="entry name" value="PRK00179.1"/>
    <property type="match status" value="1"/>
</dbReference>
<dbReference type="PANTHER" id="PTHR11469">
    <property type="entry name" value="GLUCOSE-6-PHOSPHATE ISOMERASE"/>
    <property type="match status" value="1"/>
</dbReference>
<dbReference type="PANTHER" id="PTHR11469:SF1">
    <property type="entry name" value="GLUCOSE-6-PHOSPHATE ISOMERASE"/>
    <property type="match status" value="1"/>
</dbReference>
<dbReference type="Pfam" id="PF00342">
    <property type="entry name" value="PGI"/>
    <property type="match status" value="1"/>
</dbReference>
<dbReference type="PRINTS" id="PR00662">
    <property type="entry name" value="G6PISOMERASE"/>
</dbReference>
<dbReference type="SUPFAM" id="SSF53697">
    <property type="entry name" value="SIS domain"/>
    <property type="match status" value="1"/>
</dbReference>
<dbReference type="PROSITE" id="PS00765">
    <property type="entry name" value="P_GLUCOSE_ISOMERASE_1"/>
    <property type="match status" value="1"/>
</dbReference>
<dbReference type="PROSITE" id="PS00174">
    <property type="entry name" value="P_GLUCOSE_ISOMERASE_2"/>
    <property type="match status" value="1"/>
</dbReference>
<dbReference type="PROSITE" id="PS51463">
    <property type="entry name" value="P_GLUCOSE_ISOMERASE_3"/>
    <property type="match status" value="1"/>
</dbReference>
<keyword id="KW-0963">Cytoplasm</keyword>
<keyword id="KW-0312">Gluconeogenesis</keyword>
<keyword id="KW-0324">Glycolysis</keyword>
<keyword id="KW-0413">Isomerase</keyword>
<proteinExistence type="inferred from homology"/>